<gene>
    <name evidence="2" type="primary">tmem39b</name>
</gene>
<feature type="chain" id="PRO_0000279237" description="Transmembrane protein 39B">
    <location>
        <begin position="1"/>
        <end position="483"/>
    </location>
</feature>
<feature type="transmembrane region" description="Helical" evidence="3">
    <location>
        <begin position="76"/>
        <end position="96"/>
    </location>
</feature>
<feature type="transmembrane region" description="Helical" evidence="3">
    <location>
        <begin position="114"/>
        <end position="134"/>
    </location>
</feature>
<feature type="transmembrane region" description="Helical" evidence="3">
    <location>
        <begin position="158"/>
        <end position="182"/>
    </location>
</feature>
<feature type="transmembrane region" description="Helical" evidence="3">
    <location>
        <begin position="187"/>
        <end position="207"/>
    </location>
</feature>
<feature type="transmembrane region" description="Helical" evidence="3">
    <location>
        <begin position="281"/>
        <end position="301"/>
    </location>
</feature>
<feature type="transmembrane region" description="Helical" evidence="3">
    <location>
        <begin position="414"/>
        <end position="434"/>
    </location>
</feature>
<feature type="transmembrane region" description="Helical" evidence="3">
    <location>
        <begin position="440"/>
        <end position="460"/>
    </location>
</feature>
<feature type="glycosylation site" description="N-linked (GlcNAc...) asparagine" evidence="3">
    <location>
        <position position="9"/>
    </location>
</feature>
<comment type="function">
    <text evidence="1">May protect the cells against DNA damage caused by exposure to the cold-warming stress and facilitates tissue damage repair during the recovery phase.</text>
</comment>
<comment type="subcellular location">
    <subcellularLocation>
        <location evidence="1">Endoplasmic reticulum membrane</location>
        <topology evidence="3">Multi-pass membrane protein</topology>
    </subcellularLocation>
</comment>
<comment type="similarity">
    <text evidence="4">Belongs to the TMEM39 family.</text>
</comment>
<evidence type="ECO:0000250" key="1">
    <source>
        <dbReference type="UniProtKB" id="Q7ZW11"/>
    </source>
</evidence>
<evidence type="ECO:0000250" key="2">
    <source>
        <dbReference type="UniProtKB" id="Q9GZU3"/>
    </source>
</evidence>
<evidence type="ECO:0000255" key="3"/>
<evidence type="ECO:0000305" key="4"/>
<dbReference type="EMBL" id="BC076924">
    <property type="protein sequence ID" value="AAH76924.1"/>
    <property type="molecule type" value="mRNA"/>
</dbReference>
<dbReference type="RefSeq" id="NP_001005048.1">
    <property type="nucleotide sequence ID" value="NM_001005048.1"/>
</dbReference>
<dbReference type="FunCoup" id="Q6DF19">
    <property type="interactions" value="872"/>
</dbReference>
<dbReference type="GlyCosmos" id="Q6DF19">
    <property type="glycosylation" value="1 site, No reported glycans"/>
</dbReference>
<dbReference type="GeneID" id="448588"/>
<dbReference type="KEGG" id="xtr:448588"/>
<dbReference type="AGR" id="Xenbase:XB-GENE-5904816"/>
<dbReference type="CTD" id="55116"/>
<dbReference type="Xenbase" id="XB-GENE-5904816">
    <property type="gene designation" value="tmem39b"/>
</dbReference>
<dbReference type="InParanoid" id="Q6DF19"/>
<dbReference type="OMA" id="WYQTISL"/>
<dbReference type="OrthoDB" id="5862608at2759"/>
<dbReference type="Proteomes" id="UP000008143">
    <property type="component" value="Chromosome 2"/>
</dbReference>
<dbReference type="GO" id="GO:0005789">
    <property type="term" value="C:endoplasmic reticulum membrane"/>
    <property type="evidence" value="ECO:0000250"/>
    <property type="project" value="UniProtKB"/>
</dbReference>
<dbReference type="InterPro" id="IPR019397">
    <property type="entry name" value="Uncharacterised_TMEM39"/>
</dbReference>
<dbReference type="PANTHER" id="PTHR12995">
    <property type="entry name" value="FI21814P1"/>
    <property type="match status" value="1"/>
</dbReference>
<dbReference type="PANTHER" id="PTHR12995:SF2">
    <property type="entry name" value="TRANSMEMBRANE PROTEIN 39B"/>
    <property type="match status" value="1"/>
</dbReference>
<dbReference type="Pfam" id="PF10271">
    <property type="entry name" value="Tmp39"/>
    <property type="match status" value="1"/>
</dbReference>
<reference key="1">
    <citation type="submission" date="2004-07" db="EMBL/GenBank/DDBJ databases">
        <authorList>
            <consortium name="NIH - Xenopus Gene Collection (XGC) project"/>
        </authorList>
    </citation>
    <scope>NUCLEOTIDE SEQUENCE [LARGE SCALE MRNA]</scope>
</reference>
<sequence length="483" mass="55177">MAGGRRGPNRTSYCRTPLCEPGSAGGAVHGGIPSVSGVRSRARSSSSTGLSSPPLATQTVVPLRHCKIPDLPADRHLLFELQLFFCHLIALFVHYINIYKTVWWYPPSHPPSHTSLNFHLIDFNVLTLTTIVLARRLIGAIVREASQGGKSSVPHSLLLVATRFAVLTGTGWSLCRSIILLFRTHSFFNLLFLCYPFGMYIPFLQLGWDFRRPGLSHMPNTRDLASMDRGSKDYLHVLQHILRHHMPSAEPLPTHACCLSPDLIRSEVHYLKLDFNWRVREVLLSSMLSAYYVAFVPVWFVKSTQYYDKRWSCELFLQVSLSTSVILTQHLLPARYCDLLHKAAAHLGCWQKVDPALCSNMLQHSWMEECMWPQGVLVKHNKNVYKAVGHYNVAIPSDVSHFRFHFFFSNPLRVLNILTTLEGVLIFYQLYSLLSSEKWHHTISLALILFSNYYAFFKLLRDRIVLGKAYFYTAVPDCERKLN</sequence>
<accession>Q6DF19</accession>
<protein>
    <recommendedName>
        <fullName evidence="2">Transmembrane protein 39B</fullName>
    </recommendedName>
</protein>
<keyword id="KW-0256">Endoplasmic reticulum</keyword>
<keyword id="KW-0325">Glycoprotein</keyword>
<keyword id="KW-0472">Membrane</keyword>
<keyword id="KW-1185">Reference proteome</keyword>
<keyword id="KW-0812">Transmembrane</keyword>
<keyword id="KW-1133">Transmembrane helix</keyword>
<organism>
    <name type="scientific">Xenopus tropicalis</name>
    <name type="common">Western clawed frog</name>
    <name type="synonym">Silurana tropicalis</name>
    <dbReference type="NCBI Taxonomy" id="8364"/>
    <lineage>
        <taxon>Eukaryota</taxon>
        <taxon>Metazoa</taxon>
        <taxon>Chordata</taxon>
        <taxon>Craniata</taxon>
        <taxon>Vertebrata</taxon>
        <taxon>Euteleostomi</taxon>
        <taxon>Amphibia</taxon>
        <taxon>Batrachia</taxon>
        <taxon>Anura</taxon>
        <taxon>Pipoidea</taxon>
        <taxon>Pipidae</taxon>
        <taxon>Xenopodinae</taxon>
        <taxon>Xenopus</taxon>
        <taxon>Silurana</taxon>
    </lineage>
</organism>
<name>TM39B_XENTR</name>
<proteinExistence type="evidence at transcript level"/>